<comment type="function">
    <text evidence="1">Part of the Sec protein translocase complex. Interacts with the SecYEG preprotein conducting channel. Has a central role in coupling the hydrolysis of ATP to the transfer of proteins into and across the cell membrane, serving both as a receptor for the preprotein-SecB complex and as an ATP-driven molecular motor driving the stepwise translocation of polypeptide chains across the membrane.</text>
</comment>
<comment type="catalytic activity">
    <reaction evidence="1">
        <text>ATP + H2O + cellular proteinSide 1 = ADP + phosphate + cellular proteinSide 2.</text>
        <dbReference type="EC" id="7.4.2.8"/>
    </reaction>
</comment>
<comment type="cofactor">
    <cofactor evidence="1">
        <name>Zn(2+)</name>
        <dbReference type="ChEBI" id="CHEBI:29105"/>
    </cofactor>
    <text evidence="1">May bind 1 zinc ion per subunit.</text>
</comment>
<comment type="subunit">
    <text evidence="1">Monomer and homodimer. Part of the essential Sec protein translocation apparatus which comprises SecA, SecYEG and auxiliary proteins SecDF-YajC and YidC.</text>
</comment>
<comment type="subcellular location">
    <subcellularLocation>
        <location evidence="1">Cell inner membrane</location>
        <topology evidence="1">Peripheral membrane protein</topology>
        <orientation evidence="1">Cytoplasmic side</orientation>
    </subcellularLocation>
    <subcellularLocation>
        <location evidence="1">Cytoplasm</location>
    </subcellularLocation>
    <text evidence="1">Distribution is 50-50.</text>
</comment>
<comment type="induction">
    <text evidence="1">Repressed under conditions of excess protein secretion capacity and derepressed when protein secretion becomes limiting. This is regulated by SecM.</text>
</comment>
<comment type="similarity">
    <text evidence="1">Belongs to the SecA family.</text>
</comment>
<name>SECA_ECO55</name>
<accession>B7LFW8</accession>
<feature type="chain" id="PRO_1000184228" description="Protein translocase subunit SecA">
    <location>
        <begin position="1"/>
        <end position="901"/>
    </location>
</feature>
<feature type="region of interest" description="Disordered" evidence="2">
    <location>
        <begin position="859"/>
        <end position="901"/>
    </location>
</feature>
<feature type="compositionally biased region" description="Basic residues" evidence="2">
    <location>
        <begin position="891"/>
        <end position="901"/>
    </location>
</feature>
<feature type="binding site" evidence="1">
    <location>
        <position position="87"/>
    </location>
    <ligand>
        <name>ATP</name>
        <dbReference type="ChEBI" id="CHEBI:30616"/>
    </ligand>
</feature>
<feature type="binding site" evidence="1">
    <location>
        <begin position="105"/>
        <end position="109"/>
    </location>
    <ligand>
        <name>ATP</name>
        <dbReference type="ChEBI" id="CHEBI:30616"/>
    </ligand>
</feature>
<feature type="binding site" evidence="1">
    <location>
        <position position="512"/>
    </location>
    <ligand>
        <name>ATP</name>
        <dbReference type="ChEBI" id="CHEBI:30616"/>
    </ligand>
</feature>
<feature type="binding site" evidence="1">
    <location>
        <position position="885"/>
    </location>
    <ligand>
        <name>Zn(2+)</name>
        <dbReference type="ChEBI" id="CHEBI:29105"/>
    </ligand>
</feature>
<feature type="binding site" evidence="1">
    <location>
        <position position="887"/>
    </location>
    <ligand>
        <name>Zn(2+)</name>
        <dbReference type="ChEBI" id="CHEBI:29105"/>
    </ligand>
</feature>
<feature type="binding site" evidence="1">
    <location>
        <position position="896"/>
    </location>
    <ligand>
        <name>Zn(2+)</name>
        <dbReference type="ChEBI" id="CHEBI:29105"/>
    </ligand>
</feature>
<feature type="binding site" evidence="1">
    <location>
        <position position="897"/>
    </location>
    <ligand>
        <name>Zn(2+)</name>
        <dbReference type="ChEBI" id="CHEBI:29105"/>
    </ligand>
</feature>
<keyword id="KW-0067">ATP-binding</keyword>
<keyword id="KW-0997">Cell inner membrane</keyword>
<keyword id="KW-1003">Cell membrane</keyword>
<keyword id="KW-0963">Cytoplasm</keyword>
<keyword id="KW-0472">Membrane</keyword>
<keyword id="KW-0479">Metal-binding</keyword>
<keyword id="KW-0547">Nucleotide-binding</keyword>
<keyword id="KW-0653">Protein transport</keyword>
<keyword id="KW-1185">Reference proteome</keyword>
<keyword id="KW-1278">Translocase</keyword>
<keyword id="KW-0811">Translocation</keyword>
<keyword id="KW-0813">Transport</keyword>
<keyword id="KW-0862">Zinc</keyword>
<protein>
    <recommendedName>
        <fullName evidence="1">Protein translocase subunit SecA</fullName>
        <ecNumber evidence="1">7.4.2.8</ecNumber>
    </recommendedName>
</protein>
<dbReference type="EC" id="7.4.2.8" evidence="1"/>
<dbReference type="EMBL" id="CU928145">
    <property type="protein sequence ID" value="CAU95982.1"/>
    <property type="molecule type" value="Genomic_DNA"/>
</dbReference>
<dbReference type="RefSeq" id="WP_000905786.1">
    <property type="nucleotide sequence ID" value="NC_011748.1"/>
</dbReference>
<dbReference type="SMR" id="B7LFW8"/>
<dbReference type="KEGG" id="eck:EC55989_0094"/>
<dbReference type="HOGENOM" id="CLU_005314_3_0_6"/>
<dbReference type="Proteomes" id="UP000000746">
    <property type="component" value="Chromosome"/>
</dbReference>
<dbReference type="GO" id="GO:0031522">
    <property type="term" value="C:cell envelope Sec protein transport complex"/>
    <property type="evidence" value="ECO:0007669"/>
    <property type="project" value="TreeGrafter"/>
</dbReference>
<dbReference type="GO" id="GO:0005829">
    <property type="term" value="C:cytosol"/>
    <property type="evidence" value="ECO:0007669"/>
    <property type="project" value="TreeGrafter"/>
</dbReference>
<dbReference type="GO" id="GO:0005886">
    <property type="term" value="C:plasma membrane"/>
    <property type="evidence" value="ECO:0007669"/>
    <property type="project" value="UniProtKB-SubCell"/>
</dbReference>
<dbReference type="GO" id="GO:0005524">
    <property type="term" value="F:ATP binding"/>
    <property type="evidence" value="ECO:0007669"/>
    <property type="project" value="UniProtKB-UniRule"/>
</dbReference>
<dbReference type="GO" id="GO:0046872">
    <property type="term" value="F:metal ion binding"/>
    <property type="evidence" value="ECO:0007669"/>
    <property type="project" value="UniProtKB-KW"/>
</dbReference>
<dbReference type="GO" id="GO:0008564">
    <property type="term" value="F:protein-exporting ATPase activity"/>
    <property type="evidence" value="ECO:0007669"/>
    <property type="project" value="UniProtKB-EC"/>
</dbReference>
<dbReference type="GO" id="GO:0065002">
    <property type="term" value="P:intracellular protein transmembrane transport"/>
    <property type="evidence" value="ECO:0007669"/>
    <property type="project" value="UniProtKB-UniRule"/>
</dbReference>
<dbReference type="GO" id="GO:0017038">
    <property type="term" value="P:protein import"/>
    <property type="evidence" value="ECO:0007669"/>
    <property type="project" value="InterPro"/>
</dbReference>
<dbReference type="GO" id="GO:0006605">
    <property type="term" value="P:protein targeting"/>
    <property type="evidence" value="ECO:0007669"/>
    <property type="project" value="UniProtKB-UniRule"/>
</dbReference>
<dbReference type="GO" id="GO:0043952">
    <property type="term" value="P:protein transport by the Sec complex"/>
    <property type="evidence" value="ECO:0007669"/>
    <property type="project" value="TreeGrafter"/>
</dbReference>
<dbReference type="CDD" id="cd17928">
    <property type="entry name" value="DEXDc_SecA"/>
    <property type="match status" value="1"/>
</dbReference>
<dbReference type="CDD" id="cd18803">
    <property type="entry name" value="SF2_C_secA"/>
    <property type="match status" value="1"/>
</dbReference>
<dbReference type="FunFam" id="1.10.3060.10:FF:000001">
    <property type="entry name" value="Preprotein translocase subunit SecA"/>
    <property type="match status" value="1"/>
</dbReference>
<dbReference type="FunFam" id="3.40.50.300:FF:000081">
    <property type="entry name" value="Preprotein translocase subunit SecA"/>
    <property type="match status" value="1"/>
</dbReference>
<dbReference type="FunFam" id="3.40.50.300:FF:000113">
    <property type="entry name" value="Preprotein translocase subunit SecA"/>
    <property type="match status" value="1"/>
</dbReference>
<dbReference type="FunFam" id="3.90.1440.10:FF:000001">
    <property type="entry name" value="Preprotein translocase subunit SecA"/>
    <property type="match status" value="1"/>
</dbReference>
<dbReference type="Gene3D" id="1.10.3060.10">
    <property type="entry name" value="Helical scaffold and wing domains of SecA"/>
    <property type="match status" value="1"/>
</dbReference>
<dbReference type="Gene3D" id="3.40.50.300">
    <property type="entry name" value="P-loop containing nucleotide triphosphate hydrolases"/>
    <property type="match status" value="2"/>
</dbReference>
<dbReference type="Gene3D" id="3.90.1440.10">
    <property type="entry name" value="SecA, preprotein cross-linking domain"/>
    <property type="match status" value="1"/>
</dbReference>
<dbReference type="HAMAP" id="MF_01382">
    <property type="entry name" value="SecA"/>
    <property type="match status" value="1"/>
</dbReference>
<dbReference type="InterPro" id="IPR014001">
    <property type="entry name" value="Helicase_ATP-bd"/>
</dbReference>
<dbReference type="InterPro" id="IPR001650">
    <property type="entry name" value="Helicase_C-like"/>
</dbReference>
<dbReference type="InterPro" id="IPR027417">
    <property type="entry name" value="P-loop_NTPase"/>
</dbReference>
<dbReference type="InterPro" id="IPR004027">
    <property type="entry name" value="SEC_C_motif"/>
</dbReference>
<dbReference type="InterPro" id="IPR000185">
    <property type="entry name" value="SecA"/>
</dbReference>
<dbReference type="InterPro" id="IPR020937">
    <property type="entry name" value="SecA_CS"/>
</dbReference>
<dbReference type="InterPro" id="IPR011115">
    <property type="entry name" value="SecA_DEAD"/>
</dbReference>
<dbReference type="InterPro" id="IPR014018">
    <property type="entry name" value="SecA_motor_DEAD"/>
</dbReference>
<dbReference type="InterPro" id="IPR011130">
    <property type="entry name" value="SecA_preprotein_X-link_dom"/>
</dbReference>
<dbReference type="InterPro" id="IPR044722">
    <property type="entry name" value="SecA_SF2_C"/>
</dbReference>
<dbReference type="InterPro" id="IPR011116">
    <property type="entry name" value="SecA_Wing/Scaffold"/>
</dbReference>
<dbReference type="InterPro" id="IPR036266">
    <property type="entry name" value="SecA_Wing/Scaffold_sf"/>
</dbReference>
<dbReference type="InterPro" id="IPR036670">
    <property type="entry name" value="SecA_X-link_sf"/>
</dbReference>
<dbReference type="NCBIfam" id="NF009538">
    <property type="entry name" value="PRK12904.1"/>
    <property type="match status" value="1"/>
</dbReference>
<dbReference type="NCBIfam" id="TIGR00963">
    <property type="entry name" value="secA"/>
    <property type="match status" value="1"/>
</dbReference>
<dbReference type="PANTHER" id="PTHR30612:SF0">
    <property type="entry name" value="CHLOROPLAST PROTEIN-TRANSPORTING ATPASE"/>
    <property type="match status" value="1"/>
</dbReference>
<dbReference type="PANTHER" id="PTHR30612">
    <property type="entry name" value="SECA INNER MEMBRANE COMPONENT OF SEC PROTEIN SECRETION SYSTEM"/>
    <property type="match status" value="1"/>
</dbReference>
<dbReference type="Pfam" id="PF21090">
    <property type="entry name" value="P-loop_SecA"/>
    <property type="match status" value="1"/>
</dbReference>
<dbReference type="Pfam" id="PF02810">
    <property type="entry name" value="SEC-C"/>
    <property type="match status" value="1"/>
</dbReference>
<dbReference type="Pfam" id="PF07517">
    <property type="entry name" value="SecA_DEAD"/>
    <property type="match status" value="1"/>
</dbReference>
<dbReference type="Pfam" id="PF01043">
    <property type="entry name" value="SecA_PP_bind"/>
    <property type="match status" value="1"/>
</dbReference>
<dbReference type="Pfam" id="PF07516">
    <property type="entry name" value="SecA_SW"/>
    <property type="match status" value="1"/>
</dbReference>
<dbReference type="PRINTS" id="PR00906">
    <property type="entry name" value="SECA"/>
</dbReference>
<dbReference type="SMART" id="SM00957">
    <property type="entry name" value="SecA_DEAD"/>
    <property type="match status" value="1"/>
</dbReference>
<dbReference type="SMART" id="SM00958">
    <property type="entry name" value="SecA_PP_bind"/>
    <property type="match status" value="1"/>
</dbReference>
<dbReference type="SUPFAM" id="SSF81886">
    <property type="entry name" value="Helical scaffold and wing domains of SecA"/>
    <property type="match status" value="1"/>
</dbReference>
<dbReference type="SUPFAM" id="SSF52540">
    <property type="entry name" value="P-loop containing nucleoside triphosphate hydrolases"/>
    <property type="match status" value="2"/>
</dbReference>
<dbReference type="SUPFAM" id="SSF81767">
    <property type="entry name" value="Pre-protein crosslinking domain of SecA"/>
    <property type="match status" value="1"/>
</dbReference>
<dbReference type="PROSITE" id="PS01312">
    <property type="entry name" value="SECA"/>
    <property type="match status" value="1"/>
</dbReference>
<dbReference type="PROSITE" id="PS51196">
    <property type="entry name" value="SECA_MOTOR_DEAD"/>
    <property type="match status" value="1"/>
</dbReference>
<organism>
    <name type="scientific">Escherichia coli (strain 55989 / EAEC)</name>
    <dbReference type="NCBI Taxonomy" id="585055"/>
    <lineage>
        <taxon>Bacteria</taxon>
        <taxon>Pseudomonadati</taxon>
        <taxon>Pseudomonadota</taxon>
        <taxon>Gammaproteobacteria</taxon>
        <taxon>Enterobacterales</taxon>
        <taxon>Enterobacteriaceae</taxon>
        <taxon>Escherichia</taxon>
    </lineage>
</organism>
<reference key="1">
    <citation type="journal article" date="2009" name="PLoS Genet.">
        <title>Organised genome dynamics in the Escherichia coli species results in highly diverse adaptive paths.</title>
        <authorList>
            <person name="Touchon M."/>
            <person name="Hoede C."/>
            <person name="Tenaillon O."/>
            <person name="Barbe V."/>
            <person name="Baeriswyl S."/>
            <person name="Bidet P."/>
            <person name="Bingen E."/>
            <person name="Bonacorsi S."/>
            <person name="Bouchier C."/>
            <person name="Bouvet O."/>
            <person name="Calteau A."/>
            <person name="Chiapello H."/>
            <person name="Clermont O."/>
            <person name="Cruveiller S."/>
            <person name="Danchin A."/>
            <person name="Diard M."/>
            <person name="Dossat C."/>
            <person name="Karoui M.E."/>
            <person name="Frapy E."/>
            <person name="Garry L."/>
            <person name="Ghigo J.M."/>
            <person name="Gilles A.M."/>
            <person name="Johnson J."/>
            <person name="Le Bouguenec C."/>
            <person name="Lescat M."/>
            <person name="Mangenot S."/>
            <person name="Martinez-Jehanne V."/>
            <person name="Matic I."/>
            <person name="Nassif X."/>
            <person name="Oztas S."/>
            <person name="Petit M.A."/>
            <person name="Pichon C."/>
            <person name="Rouy Z."/>
            <person name="Ruf C.S."/>
            <person name="Schneider D."/>
            <person name="Tourret J."/>
            <person name="Vacherie B."/>
            <person name="Vallenet D."/>
            <person name="Medigue C."/>
            <person name="Rocha E.P.C."/>
            <person name="Denamur E."/>
        </authorList>
    </citation>
    <scope>NUCLEOTIDE SEQUENCE [LARGE SCALE GENOMIC DNA]</scope>
    <source>
        <strain>55989 / EAEC</strain>
    </source>
</reference>
<gene>
    <name evidence="1" type="primary">secA</name>
    <name type="ordered locus">EC55989_0094</name>
</gene>
<sequence length="901" mass="101993">MLIKLLTKVFGSRNDRTLRRMRKVVNIINAMEPEMEKLSDEELKGKTAEFRARLEKGEVLENLIPEAFAVVREASKRVFGMRHFDVQLLGGMVLNERCIAEMRTGEGKTLTATLPAYLNALTGKGVHVVTVNDYLAQRDAENNRPLFEFLGLTVGINLPGMPAPAKREAYAADITYGTNNEYGFDYLRDNMAFSPEERVQRKLHYALVDEVDSILIDEARTPLIISGPAEDSSEMYKRVNKIIPHLIRQEKEDSETFQGEGHFSVDEKSRQVNLTERGLVLIEELLVKEGIMDEGESLYSPANIMLMHHVTAALRAHALFTRDVDYIVKDGEVIIVDEHTGRTMQGRRWSDGLHQAVEAKEGVQIQNENQTLASITFQNYFRLYEKLAGMTGTADTEAFEFSSIYKLDTVVVPTNRPMIRKDLPDLVYMTEAEKIQAIIEDIKERTAKGQPVLVGTISIEKSELVSNELTKAGIKHNVLNAKFHANEAAIVAQAGYPAAVTIATNMAGRGTDIVLGGSWQAEVAALENPTAEQIEKIKADWQVRHDAVLEAGGLHIIGTERHESRRIDNQLRGRSGRQGDAGSSRFYLSMEDALMRIFASDRVSGMMRKLGMKPGEAIEHPWVTKAIANAQRKVESRNFDIRKQLLEYDDVANDQRRAIYSQRNELLDVSDVSETINSIREDVFKATIDAYIPPQSLEEMWDIPGLQERLKNDFDLDLPIAEWLDKEPELHEETLRERILAQSIEVYQRKEEVVGAEMMRHFEKGVMLQTLDSLWKEHLAAMDYLRQGIHLRGYAQKDPKQEYKRESFSMFAAMLESLKYEVIGTLSKVQVRMPEEVEELEQQRRMEAERLAQMQQLSHQDDDSAAAAALAAQTGERKVGRNDPCPCGSGKKYKQCHGRLQ</sequence>
<proteinExistence type="inferred from homology"/>
<evidence type="ECO:0000255" key="1">
    <source>
        <dbReference type="HAMAP-Rule" id="MF_01382"/>
    </source>
</evidence>
<evidence type="ECO:0000256" key="2">
    <source>
        <dbReference type="SAM" id="MobiDB-lite"/>
    </source>
</evidence>